<name>FLUC_SALSV</name>
<organism>
    <name type="scientific">Salmonella schwarzengrund (strain CVM19633)</name>
    <dbReference type="NCBI Taxonomy" id="439843"/>
    <lineage>
        <taxon>Bacteria</taxon>
        <taxon>Pseudomonadati</taxon>
        <taxon>Pseudomonadota</taxon>
        <taxon>Gammaproteobacteria</taxon>
        <taxon>Enterobacterales</taxon>
        <taxon>Enterobacteriaceae</taxon>
        <taxon>Salmonella</taxon>
    </lineage>
</organism>
<protein>
    <recommendedName>
        <fullName evidence="1">Fluoride-specific ion channel FluC</fullName>
    </recommendedName>
</protein>
<proteinExistence type="inferred from homology"/>
<feature type="chain" id="PRO_1000125157" description="Fluoride-specific ion channel FluC">
    <location>
        <begin position="1"/>
        <end position="127"/>
    </location>
</feature>
<feature type="transmembrane region" description="Helical" evidence="1">
    <location>
        <begin position="4"/>
        <end position="24"/>
    </location>
</feature>
<feature type="transmembrane region" description="Helical" evidence="1">
    <location>
        <begin position="35"/>
        <end position="55"/>
    </location>
</feature>
<feature type="transmembrane region" description="Helical" evidence="1">
    <location>
        <begin position="71"/>
        <end position="91"/>
    </location>
</feature>
<feature type="transmembrane region" description="Helical" evidence="1">
    <location>
        <begin position="103"/>
        <end position="123"/>
    </location>
</feature>
<feature type="binding site" evidence="1">
    <location>
        <position position="75"/>
    </location>
    <ligand>
        <name>Na(+)</name>
        <dbReference type="ChEBI" id="CHEBI:29101"/>
        <note>structural</note>
    </ligand>
</feature>
<feature type="binding site" evidence="1">
    <location>
        <position position="78"/>
    </location>
    <ligand>
        <name>Na(+)</name>
        <dbReference type="ChEBI" id="CHEBI:29101"/>
        <note>structural</note>
    </ligand>
</feature>
<sequence>MLQLLLAVFIGGGTGSVARWMLSMRFNPLHQAIPIGTLTANLLGAFIIGMGFAWFNRMTHIDPMWKVLITTGFCGGLTTFSTFSAEVVFLLQEGRFGWALLNVLINLLGSFAMTALAFWLFSAAAAR</sequence>
<keyword id="KW-0997">Cell inner membrane</keyword>
<keyword id="KW-1003">Cell membrane</keyword>
<keyword id="KW-0407">Ion channel</keyword>
<keyword id="KW-0406">Ion transport</keyword>
<keyword id="KW-0472">Membrane</keyword>
<keyword id="KW-0479">Metal-binding</keyword>
<keyword id="KW-0915">Sodium</keyword>
<keyword id="KW-0812">Transmembrane</keyword>
<keyword id="KW-1133">Transmembrane helix</keyword>
<keyword id="KW-0813">Transport</keyword>
<accession>B4TPA0</accession>
<reference key="1">
    <citation type="journal article" date="2011" name="J. Bacteriol.">
        <title>Comparative genomics of 28 Salmonella enterica isolates: evidence for CRISPR-mediated adaptive sublineage evolution.</title>
        <authorList>
            <person name="Fricke W.F."/>
            <person name="Mammel M.K."/>
            <person name="McDermott P.F."/>
            <person name="Tartera C."/>
            <person name="White D.G."/>
            <person name="Leclerc J.E."/>
            <person name="Ravel J."/>
            <person name="Cebula T.A."/>
        </authorList>
    </citation>
    <scope>NUCLEOTIDE SEQUENCE [LARGE SCALE GENOMIC DNA]</scope>
    <source>
        <strain>CVM19633</strain>
    </source>
</reference>
<evidence type="ECO:0000255" key="1">
    <source>
        <dbReference type="HAMAP-Rule" id="MF_00454"/>
    </source>
</evidence>
<gene>
    <name evidence="1" type="primary">fluC</name>
    <name evidence="1" type="synonym">crcB</name>
    <name type="ordered locus">SeSA_A0789</name>
</gene>
<comment type="function">
    <text evidence="1">Fluoride-specific ion channel. Important for reducing fluoride concentration in the cell, thus reducing its toxicity.</text>
</comment>
<comment type="catalytic activity">
    <reaction evidence="1">
        <text>fluoride(in) = fluoride(out)</text>
        <dbReference type="Rhea" id="RHEA:76159"/>
        <dbReference type="ChEBI" id="CHEBI:17051"/>
    </reaction>
    <physiologicalReaction direction="left-to-right" evidence="1">
        <dbReference type="Rhea" id="RHEA:76160"/>
    </physiologicalReaction>
</comment>
<comment type="activity regulation">
    <text evidence="1">Na(+) is not transported, but it plays an essential structural role and its presence is essential for fluoride channel function.</text>
</comment>
<comment type="subcellular location">
    <subcellularLocation>
        <location evidence="1">Cell inner membrane</location>
        <topology evidence="1">Multi-pass membrane protein</topology>
    </subcellularLocation>
</comment>
<comment type="similarity">
    <text evidence="1">Belongs to the fluoride channel Fluc/FEX (TC 1.A.43) family.</text>
</comment>
<dbReference type="EMBL" id="CP001127">
    <property type="protein sequence ID" value="ACF91268.1"/>
    <property type="molecule type" value="Genomic_DNA"/>
</dbReference>
<dbReference type="RefSeq" id="WP_000939753.1">
    <property type="nucleotide sequence ID" value="NC_011094.1"/>
</dbReference>
<dbReference type="SMR" id="B4TPA0"/>
<dbReference type="KEGG" id="sew:SeSA_A0789"/>
<dbReference type="HOGENOM" id="CLU_114342_3_3_6"/>
<dbReference type="Proteomes" id="UP000001865">
    <property type="component" value="Chromosome"/>
</dbReference>
<dbReference type="GO" id="GO:0005886">
    <property type="term" value="C:plasma membrane"/>
    <property type="evidence" value="ECO:0007669"/>
    <property type="project" value="UniProtKB-SubCell"/>
</dbReference>
<dbReference type="GO" id="GO:0062054">
    <property type="term" value="F:fluoride channel activity"/>
    <property type="evidence" value="ECO:0007669"/>
    <property type="project" value="UniProtKB-UniRule"/>
</dbReference>
<dbReference type="GO" id="GO:0046872">
    <property type="term" value="F:metal ion binding"/>
    <property type="evidence" value="ECO:0007669"/>
    <property type="project" value="UniProtKB-KW"/>
</dbReference>
<dbReference type="GO" id="GO:0140114">
    <property type="term" value="P:cellular detoxification of fluoride"/>
    <property type="evidence" value="ECO:0007669"/>
    <property type="project" value="UniProtKB-UniRule"/>
</dbReference>
<dbReference type="HAMAP" id="MF_00454">
    <property type="entry name" value="FluC"/>
    <property type="match status" value="1"/>
</dbReference>
<dbReference type="InterPro" id="IPR003691">
    <property type="entry name" value="FluC"/>
</dbReference>
<dbReference type="NCBIfam" id="TIGR00494">
    <property type="entry name" value="crcB"/>
    <property type="match status" value="1"/>
</dbReference>
<dbReference type="NCBIfam" id="NF010792">
    <property type="entry name" value="PRK14196.1"/>
    <property type="match status" value="1"/>
</dbReference>
<dbReference type="PANTHER" id="PTHR28259">
    <property type="entry name" value="FLUORIDE EXPORT PROTEIN 1-RELATED"/>
    <property type="match status" value="1"/>
</dbReference>
<dbReference type="PANTHER" id="PTHR28259:SF1">
    <property type="entry name" value="FLUORIDE EXPORT PROTEIN 1-RELATED"/>
    <property type="match status" value="1"/>
</dbReference>
<dbReference type="Pfam" id="PF02537">
    <property type="entry name" value="CRCB"/>
    <property type="match status" value="1"/>
</dbReference>